<comment type="catalytic activity">
    <reaction evidence="1">
        <text>(S)-4-amino-5-oxopentanoate = 5-aminolevulinate</text>
        <dbReference type="Rhea" id="RHEA:14265"/>
        <dbReference type="ChEBI" id="CHEBI:57501"/>
        <dbReference type="ChEBI" id="CHEBI:356416"/>
        <dbReference type="EC" id="5.4.3.8"/>
    </reaction>
</comment>
<comment type="cofactor">
    <cofactor evidence="1">
        <name>pyridoxal 5'-phosphate</name>
        <dbReference type="ChEBI" id="CHEBI:597326"/>
    </cofactor>
</comment>
<comment type="pathway">
    <text evidence="1">Porphyrin-containing compound metabolism; protoporphyrin-IX biosynthesis; 5-aminolevulinate from L-glutamyl-tRNA(Glu): step 2/2.</text>
</comment>
<comment type="subunit">
    <text evidence="1">Homodimer.</text>
</comment>
<comment type="subcellular location">
    <subcellularLocation>
        <location evidence="1">Cytoplasm</location>
    </subcellularLocation>
</comment>
<comment type="similarity">
    <text evidence="1">Belongs to the class-III pyridoxal-phosphate-dependent aminotransferase family. HemL subfamily.</text>
</comment>
<accession>Q8DBX8</accession>
<dbReference type="EC" id="5.4.3.8" evidence="1"/>
<dbReference type="EMBL" id="AE016795">
    <property type="protein sequence ID" value="AAO10094.2"/>
    <property type="molecule type" value="Genomic_DNA"/>
</dbReference>
<dbReference type="RefSeq" id="WP_011079597.1">
    <property type="nucleotide sequence ID" value="NC_004459.3"/>
</dbReference>
<dbReference type="SMR" id="Q8DBX8"/>
<dbReference type="KEGG" id="vvu:VV1_1678"/>
<dbReference type="HOGENOM" id="CLU_016922_1_5_6"/>
<dbReference type="UniPathway" id="UPA00251">
    <property type="reaction ID" value="UER00317"/>
</dbReference>
<dbReference type="Proteomes" id="UP000002275">
    <property type="component" value="Chromosome 1"/>
</dbReference>
<dbReference type="GO" id="GO:0005737">
    <property type="term" value="C:cytoplasm"/>
    <property type="evidence" value="ECO:0007669"/>
    <property type="project" value="UniProtKB-SubCell"/>
</dbReference>
<dbReference type="GO" id="GO:0042286">
    <property type="term" value="F:glutamate-1-semialdehyde 2,1-aminomutase activity"/>
    <property type="evidence" value="ECO:0007669"/>
    <property type="project" value="UniProtKB-UniRule"/>
</dbReference>
<dbReference type="GO" id="GO:0030170">
    <property type="term" value="F:pyridoxal phosphate binding"/>
    <property type="evidence" value="ECO:0007669"/>
    <property type="project" value="InterPro"/>
</dbReference>
<dbReference type="GO" id="GO:0008483">
    <property type="term" value="F:transaminase activity"/>
    <property type="evidence" value="ECO:0007669"/>
    <property type="project" value="InterPro"/>
</dbReference>
<dbReference type="GO" id="GO:0006782">
    <property type="term" value="P:protoporphyrinogen IX biosynthetic process"/>
    <property type="evidence" value="ECO:0007669"/>
    <property type="project" value="UniProtKB-UniRule"/>
</dbReference>
<dbReference type="CDD" id="cd00610">
    <property type="entry name" value="OAT_like"/>
    <property type="match status" value="1"/>
</dbReference>
<dbReference type="FunFam" id="3.40.640.10:FF:000021">
    <property type="entry name" value="Glutamate-1-semialdehyde 2,1-aminomutase"/>
    <property type="match status" value="1"/>
</dbReference>
<dbReference type="FunFam" id="3.90.1150.10:FF:000012">
    <property type="entry name" value="Glutamate-1-semialdehyde 2,1-aminomutase"/>
    <property type="match status" value="1"/>
</dbReference>
<dbReference type="Gene3D" id="3.90.1150.10">
    <property type="entry name" value="Aspartate Aminotransferase, domain 1"/>
    <property type="match status" value="1"/>
</dbReference>
<dbReference type="Gene3D" id="3.40.640.10">
    <property type="entry name" value="Type I PLP-dependent aspartate aminotransferase-like (Major domain)"/>
    <property type="match status" value="1"/>
</dbReference>
<dbReference type="HAMAP" id="MF_00375">
    <property type="entry name" value="HemL_aminotrans_3"/>
    <property type="match status" value="1"/>
</dbReference>
<dbReference type="InterPro" id="IPR004639">
    <property type="entry name" value="4pyrrol_synth_GluAld_NH2Trfase"/>
</dbReference>
<dbReference type="InterPro" id="IPR005814">
    <property type="entry name" value="Aminotrans_3"/>
</dbReference>
<dbReference type="InterPro" id="IPR049704">
    <property type="entry name" value="Aminotrans_3_PPA_site"/>
</dbReference>
<dbReference type="InterPro" id="IPR015424">
    <property type="entry name" value="PyrdxlP-dep_Trfase"/>
</dbReference>
<dbReference type="InterPro" id="IPR015421">
    <property type="entry name" value="PyrdxlP-dep_Trfase_major"/>
</dbReference>
<dbReference type="InterPro" id="IPR015422">
    <property type="entry name" value="PyrdxlP-dep_Trfase_small"/>
</dbReference>
<dbReference type="NCBIfam" id="TIGR00713">
    <property type="entry name" value="hemL"/>
    <property type="match status" value="1"/>
</dbReference>
<dbReference type="NCBIfam" id="NF000818">
    <property type="entry name" value="PRK00062.1"/>
    <property type="match status" value="1"/>
</dbReference>
<dbReference type="PANTHER" id="PTHR43713">
    <property type="entry name" value="GLUTAMATE-1-SEMIALDEHYDE 2,1-AMINOMUTASE"/>
    <property type="match status" value="1"/>
</dbReference>
<dbReference type="PANTHER" id="PTHR43713:SF3">
    <property type="entry name" value="GLUTAMATE-1-SEMIALDEHYDE 2,1-AMINOMUTASE 1, CHLOROPLASTIC-RELATED"/>
    <property type="match status" value="1"/>
</dbReference>
<dbReference type="Pfam" id="PF00202">
    <property type="entry name" value="Aminotran_3"/>
    <property type="match status" value="1"/>
</dbReference>
<dbReference type="SUPFAM" id="SSF53383">
    <property type="entry name" value="PLP-dependent transferases"/>
    <property type="match status" value="1"/>
</dbReference>
<dbReference type="PROSITE" id="PS00600">
    <property type="entry name" value="AA_TRANSFER_CLASS_3"/>
    <property type="match status" value="1"/>
</dbReference>
<gene>
    <name evidence="1" type="primary">hemL</name>
    <name type="ordered locus">VV1_1678</name>
</gene>
<feature type="chain" id="PRO_0000120466" description="Glutamate-1-semialdehyde 2,1-aminomutase">
    <location>
        <begin position="1"/>
        <end position="431"/>
    </location>
</feature>
<feature type="modified residue" description="N6-(pyridoxal phosphate)lysine" evidence="1">
    <location>
        <position position="265"/>
    </location>
</feature>
<proteinExistence type="inferred from homology"/>
<reference key="1">
    <citation type="submission" date="2002-12" db="EMBL/GenBank/DDBJ databases">
        <title>Complete genome sequence of Vibrio vulnificus CMCP6.</title>
        <authorList>
            <person name="Rhee J.H."/>
            <person name="Kim S.Y."/>
            <person name="Chung S.S."/>
            <person name="Kim J.J."/>
            <person name="Moon Y.H."/>
            <person name="Jeong H."/>
            <person name="Choy H.E."/>
        </authorList>
    </citation>
    <scope>NUCLEOTIDE SEQUENCE [LARGE SCALE GENOMIC DNA]</scope>
    <source>
        <strain>CMCP6</strain>
    </source>
</reference>
<name>GSA_VIBVU</name>
<organism>
    <name type="scientific">Vibrio vulnificus (strain CMCP6)</name>
    <dbReference type="NCBI Taxonomy" id="216895"/>
    <lineage>
        <taxon>Bacteria</taxon>
        <taxon>Pseudomonadati</taxon>
        <taxon>Pseudomonadota</taxon>
        <taxon>Gammaproteobacteria</taxon>
        <taxon>Vibrionales</taxon>
        <taxon>Vibrionaceae</taxon>
        <taxon>Vibrio</taxon>
    </lineage>
</organism>
<evidence type="ECO:0000255" key="1">
    <source>
        <dbReference type="HAMAP-Rule" id="MF_00375"/>
    </source>
</evidence>
<keyword id="KW-0963">Cytoplasm</keyword>
<keyword id="KW-0413">Isomerase</keyword>
<keyword id="KW-0627">Porphyrin biosynthesis</keyword>
<keyword id="KW-0663">Pyridoxal phosphate</keyword>
<protein>
    <recommendedName>
        <fullName evidence="1">Glutamate-1-semialdehyde 2,1-aminomutase</fullName>
        <shortName evidence="1">GSA</shortName>
        <ecNumber evidence="1">5.4.3.8</ecNumber>
    </recommendedName>
    <alternativeName>
        <fullName evidence="1">Glutamate-1-semialdehyde aminotransferase</fullName>
        <shortName evidence="1">GSA-AT</shortName>
    </alternativeName>
</protein>
<sequence length="431" mass="46067">MTKSAELYQKAQQTIPGGVNSPVRAFNGVGGSPIFVERADGAFIFDADGKAYIDYVGSWGPMILGHNHAVIREAVIEAAQRGLSFGAPTEMEIKMAELVSELVPSMEQLRMVSSGTEATMSAIRLARGFTGRDKILKFEGCYHGHADSLLVKAGSGALTLGQPSSPGVPADFAKHTLTATFNDLDSVRELFAANKGEIACIIVEPVAGNMNCIPPVEGFHEGLREICDQEGALLIFDEVMTGFRVALGGAQAHYNIKPDLTTLGKVIGGGMPVGAFGGRKEVMQYIAPTGPVYQAGTLSGNPVAMAAGYACLTLLREEGNEKRLASKTKHLADGFKSLAAQHGIPLVVNQVGGMFGFFFTEQEQITCYEDVTKCDIERFKRFFHLMIDHGVYLAPSAFEASFTSLAHGSKEIEATLEAADRCFAILAAESK</sequence>